<dbReference type="EMBL" id="X03810">
    <property type="protein sequence ID" value="CAA27435.1"/>
    <property type="molecule type" value="Genomic_DNA"/>
</dbReference>
<dbReference type="EMBL" id="X00065">
    <property type="protein sequence ID" value="CAA24938.1"/>
    <property type="molecule type" value="Genomic_DNA"/>
</dbReference>
<dbReference type="EMBL" id="AE014296">
    <property type="protein sequence ID" value="AAF47734.1"/>
    <property type="molecule type" value="Genomic_DNA"/>
</dbReference>
<dbReference type="EMBL" id="AY122080">
    <property type="protein sequence ID" value="AAM52592.1"/>
    <property type="molecule type" value="mRNA"/>
</dbReference>
<dbReference type="EMBL" id="U57459">
    <property type="protein sequence ID" value="AAB46677.1"/>
    <property type="molecule type" value="Genomic_DNA"/>
</dbReference>
<dbReference type="EMBL" id="U57460">
    <property type="protein sequence ID" value="AAB46678.1"/>
    <property type="molecule type" value="Genomic_DNA"/>
</dbReference>
<dbReference type="EMBL" id="U57461">
    <property type="protein sequence ID" value="AAB46679.1"/>
    <property type="molecule type" value="Genomic_DNA"/>
</dbReference>
<dbReference type="EMBL" id="U57462">
    <property type="protein sequence ID" value="AAB46680.1"/>
    <property type="molecule type" value="Genomic_DNA"/>
</dbReference>
<dbReference type="EMBL" id="U57463">
    <property type="protein sequence ID" value="AAB46681.1"/>
    <property type="molecule type" value="Genomic_DNA"/>
</dbReference>
<dbReference type="EMBL" id="U57464">
    <property type="protein sequence ID" value="AAB46682.1"/>
    <property type="molecule type" value="Genomic_DNA"/>
</dbReference>
<dbReference type="EMBL" id="U57465">
    <property type="protein sequence ID" value="AAB46683.1"/>
    <property type="molecule type" value="Genomic_DNA"/>
</dbReference>
<dbReference type="EMBL" id="U57466">
    <property type="protein sequence ID" value="AAB46684.1"/>
    <property type="molecule type" value="Genomic_DNA"/>
</dbReference>
<dbReference type="EMBL" id="U57467">
    <property type="protein sequence ID" value="AAB46685.1"/>
    <property type="molecule type" value="Genomic_DNA"/>
</dbReference>
<dbReference type="EMBL" id="U57468">
    <property type="protein sequence ID" value="AAB46686.1"/>
    <property type="molecule type" value="Genomic_DNA"/>
</dbReference>
<dbReference type="EMBL" id="U57469">
    <property type="protein sequence ID" value="AAB46687.1"/>
    <property type="molecule type" value="Genomic_DNA"/>
</dbReference>
<dbReference type="EMBL" id="U57470">
    <property type="protein sequence ID" value="AAB46688.1"/>
    <property type="molecule type" value="Genomic_DNA"/>
</dbReference>
<dbReference type="EMBL" id="U57471">
    <property type="protein sequence ID" value="AAB46689.1"/>
    <property type="molecule type" value="Genomic_DNA"/>
</dbReference>
<dbReference type="EMBL" id="U57472">
    <property type="protein sequence ID" value="AAB46690.1"/>
    <property type="molecule type" value="Genomic_DNA"/>
</dbReference>
<dbReference type="EMBL" id="U57473">
    <property type="protein sequence ID" value="AAB46691.1"/>
    <property type="molecule type" value="Genomic_DNA"/>
</dbReference>
<dbReference type="PIR" id="A24827">
    <property type="entry name" value="HHFF83"/>
</dbReference>
<dbReference type="RefSeq" id="NP_001261362.1">
    <property type="nucleotide sequence ID" value="NM_001274433.1"/>
</dbReference>
<dbReference type="RefSeq" id="NP_523899.1">
    <property type="nucleotide sequence ID" value="NM_079175.4"/>
</dbReference>
<dbReference type="SMR" id="P02828"/>
<dbReference type="BioGRID" id="63886">
    <property type="interactions" value="92"/>
</dbReference>
<dbReference type="DIP" id="DIP-17366N"/>
<dbReference type="FunCoup" id="P02828">
    <property type="interactions" value="1404"/>
</dbReference>
<dbReference type="IntAct" id="P02828">
    <property type="interactions" value="5"/>
</dbReference>
<dbReference type="MINT" id="P02828"/>
<dbReference type="STRING" id="7227.FBpp0305095"/>
<dbReference type="GlyGen" id="P02828">
    <property type="glycosylation" value="1 site, 1 O-linked glycan (1 site)"/>
</dbReference>
<dbReference type="iPTMnet" id="P02828"/>
<dbReference type="PaxDb" id="7227-FBpp0305095"/>
<dbReference type="DNASU" id="38389"/>
<dbReference type="EnsemblMetazoa" id="FBtr0073040">
    <property type="protein sequence ID" value="FBpp0072904"/>
    <property type="gene ID" value="FBgn0001233"/>
</dbReference>
<dbReference type="EnsemblMetazoa" id="FBtr0332873">
    <property type="protein sequence ID" value="FBpp0305095"/>
    <property type="gene ID" value="FBgn0001233"/>
</dbReference>
<dbReference type="GeneID" id="38389"/>
<dbReference type="KEGG" id="dme:Dmel_CG1242"/>
<dbReference type="AGR" id="FB:FBgn0001233"/>
<dbReference type="CTD" id="38389"/>
<dbReference type="FlyBase" id="FBgn0001233">
    <property type="gene designation" value="Hsp83"/>
</dbReference>
<dbReference type="VEuPathDB" id="VectorBase:FBgn0001233"/>
<dbReference type="eggNOG" id="KOG0019">
    <property type="taxonomic scope" value="Eukaryota"/>
</dbReference>
<dbReference type="GeneTree" id="ENSGT01020000230401"/>
<dbReference type="HOGENOM" id="CLU_006684_1_3_1"/>
<dbReference type="InParanoid" id="P02828"/>
<dbReference type="OMA" id="CHENVIY"/>
<dbReference type="OrthoDB" id="5426351at2759"/>
<dbReference type="PhylomeDB" id="P02828"/>
<dbReference type="Reactome" id="R-DME-1227986">
    <property type="pathway name" value="Signaling by ERBB2"/>
</dbReference>
<dbReference type="Reactome" id="R-DME-1474151">
    <property type="pathway name" value="Tetrahydrobiopterin (BH4) synthesis, recycling, salvage and regulation"/>
</dbReference>
<dbReference type="Reactome" id="R-DME-2029482">
    <property type="pathway name" value="Regulation of actin dynamics for phagocytic cup formation"/>
</dbReference>
<dbReference type="Reactome" id="R-DME-203615">
    <property type="pathway name" value="eNOS activation"/>
</dbReference>
<dbReference type="Reactome" id="R-DME-3371497">
    <property type="pathway name" value="HSP90 chaperone cycle for steroid hormone receptors (SHR) in the presence of ligand"/>
</dbReference>
<dbReference type="Reactome" id="R-DME-3371511">
    <property type="pathway name" value="HSF1 activation"/>
</dbReference>
<dbReference type="Reactome" id="R-DME-3371568">
    <property type="pathway name" value="Attenuation phase"/>
</dbReference>
<dbReference type="Reactome" id="R-DME-3371571">
    <property type="pathway name" value="HSF1-dependent transactivation"/>
</dbReference>
<dbReference type="Reactome" id="R-DME-399954">
    <property type="pathway name" value="Sema3A PAK dependent Axon repulsion"/>
</dbReference>
<dbReference type="Reactome" id="R-DME-5218920">
    <property type="pathway name" value="VEGFR2 mediated vascular permeability"/>
</dbReference>
<dbReference type="Reactome" id="R-DME-6798695">
    <property type="pathway name" value="Neutrophil degranulation"/>
</dbReference>
<dbReference type="Reactome" id="R-DME-844456">
    <property type="pathway name" value="The NLRP3 inflammasome"/>
</dbReference>
<dbReference type="Reactome" id="R-DME-8863795">
    <property type="pathway name" value="Downregulation of ERBB2 signaling"/>
</dbReference>
<dbReference type="Reactome" id="R-DME-8937144">
    <property type="pathway name" value="Aryl hydrocarbon receptor signalling"/>
</dbReference>
<dbReference type="Reactome" id="R-DME-8939211">
    <property type="pathway name" value="ESR-mediated signaling"/>
</dbReference>
<dbReference type="Reactome" id="R-DME-9009391">
    <property type="pathway name" value="Extra-nuclear estrogen signaling"/>
</dbReference>
<dbReference type="Reactome" id="R-DME-9013418">
    <property type="pathway name" value="RHOBTB2 GTPase cycle"/>
</dbReference>
<dbReference type="Reactome" id="R-DME-9018519">
    <property type="pathway name" value="Estrogen-dependent gene expression"/>
</dbReference>
<dbReference type="Reactome" id="R-DME-9652282">
    <property type="pathway name" value="Drug-mediated inhibition of ERBB2 signaling"/>
</dbReference>
<dbReference type="SignaLink" id="P02828"/>
<dbReference type="BioGRID-ORCS" id="38389">
    <property type="hits" value="2 hits in 3 CRISPR screens"/>
</dbReference>
<dbReference type="CD-CODE" id="2838EF58">
    <property type="entry name" value="Centrosome"/>
</dbReference>
<dbReference type="ChiTaRS" id="Hsp83">
    <property type="organism name" value="fly"/>
</dbReference>
<dbReference type="GenomeRNAi" id="38389"/>
<dbReference type="PRO" id="PR:P02828"/>
<dbReference type="Proteomes" id="UP000000803">
    <property type="component" value="Chromosome 3L"/>
</dbReference>
<dbReference type="Bgee" id="FBgn0001233">
    <property type="expression patterns" value="Expressed in spermatogonium in testis and 332 other cell types or tissues"/>
</dbReference>
<dbReference type="ExpressionAtlas" id="P02828">
    <property type="expression patterns" value="baseline and differential"/>
</dbReference>
<dbReference type="GO" id="GO:0005813">
    <property type="term" value="C:centrosome"/>
    <property type="evidence" value="ECO:0000314"/>
    <property type="project" value="FlyBase"/>
</dbReference>
<dbReference type="GO" id="GO:0005737">
    <property type="term" value="C:cytoplasm"/>
    <property type="evidence" value="ECO:0000314"/>
    <property type="project" value="FlyBase"/>
</dbReference>
<dbReference type="GO" id="GO:0005829">
    <property type="term" value="C:cytosol"/>
    <property type="evidence" value="ECO:0000318"/>
    <property type="project" value="GO_Central"/>
</dbReference>
<dbReference type="GO" id="GO:0034663">
    <property type="term" value="C:endoplasmic reticulum chaperone complex"/>
    <property type="evidence" value="ECO:0000353"/>
    <property type="project" value="FlyBase"/>
</dbReference>
<dbReference type="GO" id="GO:0005739">
    <property type="term" value="C:mitochondrion"/>
    <property type="evidence" value="ECO:0000250"/>
    <property type="project" value="FlyBase"/>
</dbReference>
<dbReference type="GO" id="GO:0048471">
    <property type="term" value="C:perinuclear region of cytoplasm"/>
    <property type="evidence" value="ECO:0000314"/>
    <property type="project" value="FlyBase"/>
</dbReference>
<dbReference type="GO" id="GO:0005886">
    <property type="term" value="C:plasma membrane"/>
    <property type="evidence" value="ECO:0007005"/>
    <property type="project" value="FlyBase"/>
</dbReference>
<dbReference type="GO" id="GO:0005705">
    <property type="term" value="C:polytene chromosome interband"/>
    <property type="evidence" value="ECO:0000314"/>
    <property type="project" value="FlyBase"/>
</dbReference>
<dbReference type="GO" id="GO:0101031">
    <property type="term" value="C:protein folding chaperone complex"/>
    <property type="evidence" value="ECO:0000314"/>
    <property type="project" value="FlyBase"/>
</dbReference>
<dbReference type="GO" id="GO:0032991">
    <property type="term" value="C:protein-containing complex"/>
    <property type="evidence" value="ECO:0000318"/>
    <property type="project" value="GO_Central"/>
</dbReference>
<dbReference type="GO" id="GO:0005524">
    <property type="term" value="F:ATP binding"/>
    <property type="evidence" value="ECO:0000318"/>
    <property type="project" value="GO_Central"/>
</dbReference>
<dbReference type="GO" id="GO:0016887">
    <property type="term" value="F:ATP hydrolysis activity"/>
    <property type="evidence" value="ECO:0000250"/>
    <property type="project" value="FlyBase"/>
</dbReference>
<dbReference type="GO" id="GO:0140662">
    <property type="term" value="F:ATP-dependent protein folding chaperone"/>
    <property type="evidence" value="ECO:0007669"/>
    <property type="project" value="InterPro"/>
</dbReference>
<dbReference type="GO" id="GO:0005158">
    <property type="term" value="F:insulin receptor binding"/>
    <property type="evidence" value="ECO:0000314"/>
    <property type="project" value="FlyBase"/>
</dbReference>
<dbReference type="GO" id="GO:0030911">
    <property type="term" value="F:TPR domain binding"/>
    <property type="evidence" value="ECO:0000353"/>
    <property type="project" value="UniProtKB"/>
</dbReference>
<dbReference type="GO" id="GO:0051082">
    <property type="term" value="F:unfolded protein binding"/>
    <property type="evidence" value="ECO:0000314"/>
    <property type="project" value="FlyBase"/>
</dbReference>
<dbReference type="GO" id="GO:0034605">
    <property type="term" value="P:cellular response to heat"/>
    <property type="evidence" value="ECO:0000250"/>
    <property type="project" value="FlyBase"/>
</dbReference>
<dbReference type="GO" id="GO:0007098">
    <property type="term" value="P:centrosome cycle"/>
    <property type="evidence" value="ECO:0000315"/>
    <property type="project" value="FlyBase"/>
</dbReference>
<dbReference type="GO" id="GO:0009631">
    <property type="term" value="P:cold acclimation"/>
    <property type="evidence" value="ECO:0000270"/>
    <property type="project" value="FlyBase"/>
</dbReference>
<dbReference type="GO" id="GO:0097753">
    <property type="term" value="P:membrane bending"/>
    <property type="evidence" value="ECO:0000314"/>
    <property type="project" value="FlyBase"/>
</dbReference>
<dbReference type="GO" id="GO:0098866">
    <property type="term" value="P:multivesicular body fusion to apical plasma membrane"/>
    <property type="evidence" value="ECO:0000315"/>
    <property type="project" value="FlyBase"/>
</dbReference>
<dbReference type="GO" id="GO:0008285">
    <property type="term" value="P:negative regulation of cell population proliferation"/>
    <property type="evidence" value="ECO:0000315"/>
    <property type="project" value="FlyBase"/>
</dbReference>
<dbReference type="GO" id="GO:0048477">
    <property type="term" value="P:oogenesis"/>
    <property type="evidence" value="ECO:0000316"/>
    <property type="project" value="FlyBase"/>
</dbReference>
<dbReference type="GO" id="GO:0019094">
    <property type="term" value="P:pole plasm mRNA localization"/>
    <property type="evidence" value="ECO:0000315"/>
    <property type="project" value="FlyBase"/>
</dbReference>
<dbReference type="GO" id="GO:0046628">
    <property type="term" value="P:positive regulation of insulin receptor signaling pathway"/>
    <property type="evidence" value="ECO:0000316"/>
    <property type="project" value="FlyBase"/>
</dbReference>
<dbReference type="GO" id="GO:0002052">
    <property type="term" value="P:positive regulation of neuroblast proliferation"/>
    <property type="evidence" value="ECO:0000315"/>
    <property type="project" value="FlyBase"/>
</dbReference>
<dbReference type="GO" id="GO:0043248">
    <property type="term" value="P:proteasome assembly"/>
    <property type="evidence" value="ECO:0000314"/>
    <property type="project" value="FlyBase"/>
</dbReference>
<dbReference type="GO" id="GO:0006457">
    <property type="term" value="P:protein folding"/>
    <property type="evidence" value="ECO:0000250"/>
    <property type="project" value="FlyBase"/>
</dbReference>
<dbReference type="GO" id="GO:0050821">
    <property type="term" value="P:protein stabilization"/>
    <property type="evidence" value="ECO:0000318"/>
    <property type="project" value="GO_Central"/>
</dbReference>
<dbReference type="GO" id="GO:0045187">
    <property type="term" value="P:regulation of circadian sleep/wake cycle, sleep"/>
    <property type="evidence" value="ECO:0000315"/>
    <property type="project" value="FlyBase"/>
</dbReference>
<dbReference type="GO" id="GO:0009408">
    <property type="term" value="P:response to heat"/>
    <property type="evidence" value="ECO:0000270"/>
    <property type="project" value="FlyBase"/>
</dbReference>
<dbReference type="GO" id="GO:0070922">
    <property type="term" value="P:RISC complex assembly"/>
    <property type="evidence" value="ECO:0000316"/>
    <property type="project" value="FlyBase"/>
</dbReference>
<dbReference type="CDD" id="cd16927">
    <property type="entry name" value="HATPase_Hsp90-like"/>
    <property type="match status" value="1"/>
</dbReference>
<dbReference type="FunFam" id="1.20.120.790:FF:000001">
    <property type="entry name" value="Heat shock protein 90 alpha"/>
    <property type="match status" value="1"/>
</dbReference>
<dbReference type="FunFam" id="3.30.230.80:FF:000001">
    <property type="entry name" value="Heat shock protein 90 alpha"/>
    <property type="match status" value="1"/>
</dbReference>
<dbReference type="FunFam" id="3.40.50.11260:FF:000001">
    <property type="entry name" value="Heat shock protein 90 alpha"/>
    <property type="match status" value="1"/>
</dbReference>
<dbReference type="FunFam" id="3.30.565.10:FF:000001">
    <property type="entry name" value="Heat shock protein HSP 90-alpha"/>
    <property type="match status" value="1"/>
</dbReference>
<dbReference type="Gene3D" id="3.30.230.80">
    <property type="match status" value="1"/>
</dbReference>
<dbReference type="Gene3D" id="3.40.50.11260">
    <property type="match status" value="1"/>
</dbReference>
<dbReference type="Gene3D" id="1.20.120.790">
    <property type="entry name" value="Heat shock protein 90, C-terminal domain"/>
    <property type="match status" value="1"/>
</dbReference>
<dbReference type="Gene3D" id="3.30.565.10">
    <property type="entry name" value="Histidine kinase-like ATPase, C-terminal domain"/>
    <property type="match status" value="1"/>
</dbReference>
<dbReference type="HAMAP" id="MF_00505">
    <property type="entry name" value="HSP90"/>
    <property type="match status" value="1"/>
</dbReference>
<dbReference type="InterPro" id="IPR036890">
    <property type="entry name" value="HATPase_C_sf"/>
</dbReference>
<dbReference type="InterPro" id="IPR019805">
    <property type="entry name" value="Heat_shock_protein_90_CS"/>
</dbReference>
<dbReference type="InterPro" id="IPR037196">
    <property type="entry name" value="HSP90_C"/>
</dbReference>
<dbReference type="InterPro" id="IPR001404">
    <property type="entry name" value="Hsp90_fam"/>
</dbReference>
<dbReference type="InterPro" id="IPR020575">
    <property type="entry name" value="Hsp90_N"/>
</dbReference>
<dbReference type="InterPro" id="IPR020568">
    <property type="entry name" value="Ribosomal_Su5_D2-typ_SF"/>
</dbReference>
<dbReference type="NCBIfam" id="NF003555">
    <property type="entry name" value="PRK05218.1"/>
    <property type="match status" value="1"/>
</dbReference>
<dbReference type="PANTHER" id="PTHR11528">
    <property type="entry name" value="HEAT SHOCK PROTEIN 90 FAMILY MEMBER"/>
    <property type="match status" value="1"/>
</dbReference>
<dbReference type="Pfam" id="PF13589">
    <property type="entry name" value="HATPase_c_3"/>
    <property type="match status" value="1"/>
</dbReference>
<dbReference type="Pfam" id="PF00183">
    <property type="entry name" value="HSP90"/>
    <property type="match status" value="1"/>
</dbReference>
<dbReference type="PIRSF" id="PIRSF002583">
    <property type="entry name" value="Hsp90"/>
    <property type="match status" value="1"/>
</dbReference>
<dbReference type="PRINTS" id="PR00775">
    <property type="entry name" value="HEATSHOCK90"/>
</dbReference>
<dbReference type="SMART" id="SM00387">
    <property type="entry name" value="HATPase_c"/>
    <property type="match status" value="1"/>
</dbReference>
<dbReference type="SUPFAM" id="SSF55874">
    <property type="entry name" value="ATPase domain of HSP90 chaperone/DNA topoisomerase II/histidine kinase"/>
    <property type="match status" value="1"/>
</dbReference>
<dbReference type="SUPFAM" id="SSF110942">
    <property type="entry name" value="HSP90 C-terminal domain"/>
    <property type="match status" value="1"/>
</dbReference>
<dbReference type="SUPFAM" id="SSF54211">
    <property type="entry name" value="Ribosomal protein S5 domain 2-like"/>
    <property type="match status" value="1"/>
</dbReference>
<dbReference type="PROSITE" id="PS00298">
    <property type="entry name" value="HSP90"/>
    <property type="match status" value="1"/>
</dbReference>
<accession>P02828</accession>
<accession>P92174</accession>
<accession>P92202</accession>
<accession>Q9VZT3</accession>
<gene>
    <name evidence="15" type="primary">Hsp83</name>
    <name evidence="15" type="synonym">Hsp82</name>
    <name evidence="13 15" type="synonym">Hsp90</name>
    <name evidence="15" type="ORF">CG1242</name>
</gene>
<sequence length="717" mass="81865">MPEEAETFAFQAEIAQLMSLIINTFYSNKEIFLRELISNASDALDKIRYESLTDPSKLDSGKELYIKLIPNKTAGTLTIIDTGIGMTKSDLVNNLGTIAKSGTKAFMEALQAGADISMIGQFGVGFYSAYLVADKVTVTSKNNDDEQYVWESSAGGSFTVRADNSEPLGRGTKIVLYIKEDQTDYLEESKIKEIVNKHSQFIGYPIKLLVEKEREKEVSDDEADDEKKEGDEKKEMETDEPKIEDVGEDEDADKKDKDAKKKKTIKEKYTEDEELNKTKPIWTRNPDDISQEEYGEFYKSLTNDWEDHLAVKHFSVEGQLEFRALLFIPRRTPFDLFENQKKRNNIKLYVRRVFIMDNCEDLIPEYLNFMKGVVDSEDLPLNISREMLQQNKVLKVIRKNLVKKTMELIEELTEDKENYKKFYDQFSKNLKLGVHEDSNNRAKLADFLRFHTSASGDDFCSLADYVSRMKDNQKHVYFITGESKDQVSNSAFVERVKARGFEVVYMTEPIDEYVIQHLKEYKGKQLVSVTKEGLELPEDESEKKKREEDKAKFESLCKLMKSILDNKVEKVVVSNRLVDSPCCIVTSQFGWSANMERIMKAQALRDTATMGYMAGKKQLEINPDHPIVETLRQKADADKNDKAVKDLVILLFETSLLSSGFSLDSPQVHASRIYRMIKLGLGIDEDEPMTTDDAQSAGDAPSLVEDTEDASHMEEVD</sequence>
<protein>
    <recommendedName>
        <fullName>Heat shock protein 83</fullName>
    </recommendedName>
    <alternativeName>
        <fullName>HSP 82</fullName>
    </alternativeName>
</protein>
<reference key="1">
    <citation type="journal article" date="1986" name="J. Mol. Biol.">
        <title>Interspecific nucleotide sequence comparisons used to identify regulatory and structural features of the Drosophila hsp82 gene.</title>
        <authorList>
            <person name="Blackman R.K."/>
            <person name="Meselson M."/>
        </authorList>
    </citation>
    <scope>NUCLEOTIDE SEQUENCE [GENOMIC DNA]</scope>
</reference>
<reference key="2">
    <citation type="journal article" date="2000" name="Science">
        <title>The genome sequence of Drosophila melanogaster.</title>
        <authorList>
            <person name="Adams M.D."/>
            <person name="Celniker S.E."/>
            <person name="Holt R.A."/>
            <person name="Evans C.A."/>
            <person name="Gocayne J.D."/>
            <person name="Amanatides P.G."/>
            <person name="Scherer S.E."/>
            <person name="Li P.W."/>
            <person name="Hoskins R.A."/>
            <person name="Galle R.F."/>
            <person name="George R.A."/>
            <person name="Lewis S.E."/>
            <person name="Richards S."/>
            <person name="Ashburner M."/>
            <person name="Henderson S.N."/>
            <person name="Sutton G.G."/>
            <person name="Wortman J.R."/>
            <person name="Yandell M.D."/>
            <person name="Zhang Q."/>
            <person name="Chen L.X."/>
            <person name="Brandon R.C."/>
            <person name="Rogers Y.-H.C."/>
            <person name="Blazej R.G."/>
            <person name="Champe M."/>
            <person name="Pfeiffer B.D."/>
            <person name="Wan K.H."/>
            <person name="Doyle C."/>
            <person name="Baxter E.G."/>
            <person name="Helt G."/>
            <person name="Nelson C.R."/>
            <person name="Miklos G.L.G."/>
            <person name="Abril J.F."/>
            <person name="Agbayani A."/>
            <person name="An H.-J."/>
            <person name="Andrews-Pfannkoch C."/>
            <person name="Baldwin D."/>
            <person name="Ballew R.M."/>
            <person name="Basu A."/>
            <person name="Baxendale J."/>
            <person name="Bayraktaroglu L."/>
            <person name="Beasley E.M."/>
            <person name="Beeson K.Y."/>
            <person name="Benos P.V."/>
            <person name="Berman B.P."/>
            <person name="Bhandari D."/>
            <person name="Bolshakov S."/>
            <person name="Borkova D."/>
            <person name="Botchan M.R."/>
            <person name="Bouck J."/>
            <person name="Brokstein P."/>
            <person name="Brottier P."/>
            <person name="Burtis K.C."/>
            <person name="Busam D.A."/>
            <person name="Butler H."/>
            <person name="Cadieu E."/>
            <person name="Center A."/>
            <person name="Chandra I."/>
            <person name="Cherry J.M."/>
            <person name="Cawley S."/>
            <person name="Dahlke C."/>
            <person name="Davenport L.B."/>
            <person name="Davies P."/>
            <person name="de Pablos B."/>
            <person name="Delcher A."/>
            <person name="Deng Z."/>
            <person name="Mays A.D."/>
            <person name="Dew I."/>
            <person name="Dietz S.M."/>
            <person name="Dodson K."/>
            <person name="Doup L.E."/>
            <person name="Downes M."/>
            <person name="Dugan-Rocha S."/>
            <person name="Dunkov B.C."/>
            <person name="Dunn P."/>
            <person name="Durbin K.J."/>
            <person name="Evangelista C.C."/>
            <person name="Ferraz C."/>
            <person name="Ferriera S."/>
            <person name="Fleischmann W."/>
            <person name="Fosler C."/>
            <person name="Gabrielian A.E."/>
            <person name="Garg N.S."/>
            <person name="Gelbart W.M."/>
            <person name="Glasser K."/>
            <person name="Glodek A."/>
            <person name="Gong F."/>
            <person name="Gorrell J.H."/>
            <person name="Gu Z."/>
            <person name="Guan P."/>
            <person name="Harris M."/>
            <person name="Harris N.L."/>
            <person name="Harvey D.A."/>
            <person name="Heiman T.J."/>
            <person name="Hernandez J.R."/>
            <person name="Houck J."/>
            <person name="Hostin D."/>
            <person name="Houston K.A."/>
            <person name="Howland T.J."/>
            <person name="Wei M.-H."/>
            <person name="Ibegwam C."/>
            <person name="Jalali M."/>
            <person name="Kalush F."/>
            <person name="Karpen G.H."/>
            <person name="Ke Z."/>
            <person name="Kennison J.A."/>
            <person name="Ketchum K.A."/>
            <person name="Kimmel B.E."/>
            <person name="Kodira C.D."/>
            <person name="Kraft C.L."/>
            <person name="Kravitz S."/>
            <person name="Kulp D."/>
            <person name="Lai Z."/>
            <person name="Lasko P."/>
            <person name="Lei Y."/>
            <person name="Levitsky A.A."/>
            <person name="Li J.H."/>
            <person name="Li Z."/>
            <person name="Liang Y."/>
            <person name="Lin X."/>
            <person name="Liu X."/>
            <person name="Mattei B."/>
            <person name="McIntosh T.C."/>
            <person name="McLeod M.P."/>
            <person name="McPherson D."/>
            <person name="Merkulov G."/>
            <person name="Milshina N.V."/>
            <person name="Mobarry C."/>
            <person name="Morris J."/>
            <person name="Moshrefi A."/>
            <person name="Mount S.M."/>
            <person name="Moy M."/>
            <person name="Murphy B."/>
            <person name="Murphy L."/>
            <person name="Muzny D.M."/>
            <person name="Nelson D.L."/>
            <person name="Nelson D.R."/>
            <person name="Nelson K.A."/>
            <person name="Nixon K."/>
            <person name="Nusskern D.R."/>
            <person name="Pacleb J.M."/>
            <person name="Palazzolo M."/>
            <person name="Pittman G.S."/>
            <person name="Pan S."/>
            <person name="Pollard J."/>
            <person name="Puri V."/>
            <person name="Reese M.G."/>
            <person name="Reinert K."/>
            <person name="Remington K."/>
            <person name="Saunders R.D.C."/>
            <person name="Scheeler F."/>
            <person name="Shen H."/>
            <person name="Shue B.C."/>
            <person name="Siden-Kiamos I."/>
            <person name="Simpson M."/>
            <person name="Skupski M.P."/>
            <person name="Smith T.J."/>
            <person name="Spier E."/>
            <person name="Spradling A.C."/>
            <person name="Stapleton M."/>
            <person name="Strong R."/>
            <person name="Sun E."/>
            <person name="Svirskas R."/>
            <person name="Tector C."/>
            <person name="Turner R."/>
            <person name="Venter E."/>
            <person name="Wang A.H."/>
            <person name="Wang X."/>
            <person name="Wang Z.-Y."/>
            <person name="Wassarman D.A."/>
            <person name="Weinstock G.M."/>
            <person name="Weissenbach J."/>
            <person name="Williams S.M."/>
            <person name="Woodage T."/>
            <person name="Worley K.C."/>
            <person name="Wu D."/>
            <person name="Yang S."/>
            <person name="Yao Q.A."/>
            <person name="Ye J."/>
            <person name="Yeh R.-F."/>
            <person name="Zaveri J.S."/>
            <person name="Zhan M."/>
            <person name="Zhang G."/>
            <person name="Zhao Q."/>
            <person name="Zheng L."/>
            <person name="Zheng X.H."/>
            <person name="Zhong F.N."/>
            <person name="Zhong W."/>
            <person name="Zhou X."/>
            <person name="Zhu S.C."/>
            <person name="Zhu X."/>
            <person name="Smith H.O."/>
            <person name="Gibbs R.A."/>
            <person name="Myers E.W."/>
            <person name="Rubin G.M."/>
            <person name="Venter J.C."/>
        </authorList>
    </citation>
    <scope>NUCLEOTIDE SEQUENCE [LARGE SCALE GENOMIC DNA]</scope>
    <source>
        <strain>Berkeley</strain>
    </source>
</reference>
<reference key="3">
    <citation type="journal article" date="2002" name="Genome Biol.">
        <title>Annotation of the Drosophila melanogaster euchromatic genome: a systematic review.</title>
        <authorList>
            <person name="Misra S."/>
            <person name="Crosby M.A."/>
            <person name="Mungall C.J."/>
            <person name="Matthews B.B."/>
            <person name="Campbell K.S."/>
            <person name="Hradecky P."/>
            <person name="Huang Y."/>
            <person name="Kaminker J.S."/>
            <person name="Millburn G.H."/>
            <person name="Prochnik S.E."/>
            <person name="Smith C.D."/>
            <person name="Tupy J.L."/>
            <person name="Whitfield E.J."/>
            <person name="Bayraktaroglu L."/>
            <person name="Berman B.P."/>
            <person name="Bettencourt B.R."/>
            <person name="Celniker S.E."/>
            <person name="de Grey A.D.N.J."/>
            <person name="Drysdale R.A."/>
            <person name="Harris N.L."/>
            <person name="Richter J."/>
            <person name="Russo S."/>
            <person name="Schroeder A.J."/>
            <person name="Shu S.Q."/>
            <person name="Stapleton M."/>
            <person name="Yamada C."/>
            <person name="Ashburner M."/>
            <person name="Gelbart W.M."/>
            <person name="Rubin G.M."/>
            <person name="Lewis S.E."/>
        </authorList>
    </citation>
    <scope>GENOME REANNOTATION</scope>
    <source>
        <strain>Berkeley</strain>
    </source>
</reference>
<reference key="4">
    <citation type="journal article" date="2002" name="Genome Biol.">
        <title>A Drosophila full-length cDNA resource.</title>
        <authorList>
            <person name="Stapleton M."/>
            <person name="Carlson J.W."/>
            <person name="Brokstein P."/>
            <person name="Yu C."/>
            <person name="Champe M."/>
            <person name="George R.A."/>
            <person name="Guarin H."/>
            <person name="Kronmiller B."/>
            <person name="Pacleb J.M."/>
            <person name="Park S."/>
            <person name="Wan K.H."/>
            <person name="Rubin G.M."/>
            <person name="Celniker S.E."/>
        </authorList>
    </citation>
    <scope>NUCLEOTIDE SEQUENCE [LARGE SCALE MRNA]</scope>
    <source>
        <strain>Berkeley</strain>
        <tissue>Testis</tissue>
    </source>
</reference>
<reference key="5">
    <citation type="journal article" date="1983" name="Nucleic Acids Res.">
        <title>Localization of the hsp83 transcript within a 3292 nucleotide sequence from the 63B heat shock locus of D. melanogaster.</title>
        <authorList>
            <person name="Hackett R.W."/>
            <person name="Lis J.T."/>
        </authorList>
    </citation>
    <scope>NUCLEOTIDE SEQUENCE OF 1-375</scope>
</reference>
<reference key="6">
    <citation type="journal article" date="1996" name="Genetics">
        <title>Contrasting histories of three gene regions associated with In(3L)Payne of Drosophila melanogaster.</title>
        <authorList>
            <person name="Hasson E."/>
            <person name="Eanes W.F."/>
        </authorList>
    </citation>
    <scope>NUCLEOTIDE SEQUENCE [GENOMIC DNA] OF 1-371</scope>
    <source>
        <strain>178.7</strain>
        <strain>709.6</strain>
        <strain>DPF-13</strain>
        <strain>DPF-2</strain>
        <strain>DPF-30</strain>
        <strain>DPF-46</strain>
        <strain>DPF-62</strain>
        <strain>DPF-77</strain>
        <strain>DPF-82.1</strain>
        <strain>EM-10</strain>
        <strain>MA-10.2</strain>
        <strain>MA-4.2</strain>
        <strain>MA-4.4</strain>
        <strain>VC-805</strain>
        <strain>VC-815</strain>
    </source>
</reference>
<reference key="7">
    <citation type="journal article" date="2001" name="J. Cell Sci.">
        <title>The Drosophila Dpit47 protein is a nuclear Hsp90 co-chaperone that interacts with DNA polymerase alpha.</title>
        <authorList>
            <person name="Crevel G."/>
            <person name="Bates H."/>
            <person name="Huikeshoven H."/>
            <person name="Cotterill S."/>
        </authorList>
    </citation>
    <scope>INTERACTION WITH DPIT47 AND HSP70AA</scope>
</reference>
<reference key="8">
    <citation type="journal article" date="2007" name="Mol. Biosyst.">
        <title>An integrated chemical, mass spectrometric and computational strategy for (quantitative) phosphoproteomics: application to Drosophila melanogaster Kc167 cells.</title>
        <authorList>
            <person name="Bodenmiller B."/>
            <person name="Mueller L.N."/>
            <person name="Pedrioli P.G.A."/>
            <person name="Pflieger D."/>
            <person name="Juenger M.A."/>
            <person name="Eng J.K."/>
            <person name="Aebersold R."/>
            <person name="Tao W.A."/>
        </authorList>
    </citation>
    <scope>PHOSPHORYLATION [LARGE SCALE ANALYSIS] AT SER-219</scope>
    <scope>IDENTIFICATION BY MASS SPECTROMETRY</scope>
</reference>
<reference key="9">
    <citation type="journal article" date="2008" name="J. Proteome Res.">
        <title>Phosphoproteome analysis of Drosophila melanogaster embryos.</title>
        <authorList>
            <person name="Zhai B."/>
            <person name="Villen J."/>
            <person name="Beausoleil S.A."/>
            <person name="Mintseris J."/>
            <person name="Gygi S.P."/>
        </authorList>
    </citation>
    <scope>PHOSPHORYLATION [LARGE SCALE ANALYSIS] AT TYR-294</scope>
    <scope>IDENTIFICATION BY MASS SPECTROMETRY</scope>
    <source>
        <tissue>Embryo</tissue>
    </source>
</reference>
<reference key="10">
    <citation type="journal article" date="2008" name="Nature">
        <title>NAD synthase NMNAT acts as a chaperone to protect against neurodegeneration.</title>
        <authorList>
            <person name="Zhai R.G."/>
            <person name="Zhang F."/>
            <person name="Hiesinger P.R."/>
            <person name="Cao Y."/>
            <person name="Haueter C.M."/>
            <person name="Bellen H.J."/>
        </authorList>
    </citation>
    <scope>FUNCTION</scope>
</reference>
<reference key="11">
    <citation type="journal article" date="2011" name="Nat. Genet.">
        <title>Drosophila Piwi functions in Hsp90-mediated suppression of phenotypic variation.</title>
        <authorList>
            <person name="Gangaraju V.K."/>
            <person name="Yin H."/>
            <person name="Weiner M.M."/>
            <person name="Wang J."/>
            <person name="Huang X.A."/>
            <person name="Lin H."/>
        </authorList>
    </citation>
    <scope>FUNCTION</scope>
    <scope>INTERACTION WITH HOP AND PIWI</scope>
</reference>
<reference key="12">
    <citation type="journal article" date="2012" name="Mol. Cell">
        <title>The cochaperone shutdown defines a group of biogenesis factors essential for all piRNA populations in Drosophila.</title>
        <authorList>
            <person name="Olivieri D."/>
            <person name="Senti K.A."/>
            <person name="Subramanian S."/>
            <person name="Sachidanandam R."/>
            <person name="Brennecke J."/>
        </authorList>
    </citation>
    <scope>FUNCTION</scope>
    <scope>INTERACTION WITH SHU</scope>
</reference>
<reference key="13">
    <citation type="journal article" date="2013" name="J. Cell Biol.">
        <title>The C8ORF38 homologue Sicily is a cytosolic chaperone for a mitochondrial complex I subunit.</title>
        <authorList>
            <person name="Zhang K."/>
            <person name="Li Z."/>
            <person name="Jaiswal M."/>
            <person name="Bayat V."/>
            <person name="Xiong B."/>
            <person name="Sandoval H."/>
            <person name="Charng W.L."/>
            <person name="David G."/>
            <person name="Haueter C."/>
            <person name="Yamamoto S."/>
            <person name="Graham B.H."/>
            <person name="Bellen H.J."/>
        </authorList>
    </citation>
    <scope>IDENTIFICATION IN A COMPLEX WITH SICILY AND ND-42</scope>
    <scope>DISRUPTION PHENOTYPE</scope>
</reference>
<reference key="14">
    <citation type="journal article" date="2017" name="Insect Biochem. Mol. Biol.">
        <title>Nucleoporin Nup358 facilitates nuclear import of Methoprene-tolerant (Met) in an importin beta- and Hsp83-dependent manner.</title>
        <authorList>
            <person name="He Q."/>
            <person name="Zhang Y."/>
            <person name="Zhang X."/>
            <person name="Xu D."/>
            <person name="Dong W."/>
            <person name="Li S."/>
            <person name="Wu R."/>
        </authorList>
    </citation>
    <scope>INTERACTION WITH NUP358</scope>
</reference>
<reference key="15">
    <citation type="journal article" date="2020" name="J. Cell Sci.">
        <title>Drosophila Morgana is an Hsp90-interacting protein with a direct role in microtubule polymerisation.</title>
        <authorList>
            <person name="Palumbo V."/>
            <person name="Tariq A."/>
            <person name="Borgal L."/>
            <person name="Metz J."/>
            <person name="Brancaccio M."/>
            <person name="Gatti M."/>
            <person name="Wakefield J.G."/>
            <person name="Bonaccorsi S."/>
        </authorList>
    </citation>
    <scope>INTERACTION WITH MORA</scope>
</reference>
<feature type="chain" id="PRO_0000062930" description="Heat shock protein 83">
    <location>
        <begin position="1"/>
        <end position="717"/>
    </location>
</feature>
<feature type="region of interest" description="Disordered" evidence="3">
    <location>
        <begin position="213"/>
        <end position="263"/>
    </location>
</feature>
<feature type="region of interest" description="Disordered" evidence="3">
    <location>
        <begin position="685"/>
        <end position="717"/>
    </location>
</feature>
<feature type="short sequence motif" description="TPR repeat-binding">
    <location>
        <begin position="713"/>
        <end position="717"/>
    </location>
</feature>
<feature type="compositionally biased region" description="Basic and acidic residues" evidence="3">
    <location>
        <begin position="225"/>
        <end position="245"/>
    </location>
</feature>
<feature type="binding site" evidence="1">
    <location>
        <position position="39"/>
    </location>
    <ligand>
        <name>ATP</name>
        <dbReference type="ChEBI" id="CHEBI:30616"/>
    </ligand>
</feature>
<feature type="binding site" evidence="1">
    <location>
        <position position="81"/>
    </location>
    <ligand>
        <name>ATP</name>
        <dbReference type="ChEBI" id="CHEBI:30616"/>
    </ligand>
</feature>
<feature type="binding site" evidence="1">
    <location>
        <position position="100"/>
    </location>
    <ligand>
        <name>ATP</name>
        <dbReference type="ChEBI" id="CHEBI:30616"/>
    </ligand>
</feature>
<feature type="binding site" evidence="1">
    <location>
        <position position="126"/>
    </location>
    <ligand>
        <name>ATP</name>
        <dbReference type="ChEBI" id="CHEBI:30616"/>
    </ligand>
</feature>
<feature type="binding site" evidence="1">
    <location>
        <position position="385"/>
    </location>
    <ligand>
        <name>ATP</name>
        <dbReference type="ChEBI" id="CHEBI:30616"/>
    </ligand>
</feature>
<feature type="modified residue" description="Phosphoserine" evidence="5">
    <location>
        <position position="219"/>
    </location>
</feature>
<feature type="modified residue" description="Phosphotyrosine" evidence="6">
    <location>
        <position position="294"/>
    </location>
</feature>
<feature type="sequence variant" description="In strain: MA-10.2, DPF-13, DPF-82.1, EM-10, 178.7, 709.6 and MA-4.4.">
    <location>
        <position position="234"/>
    </location>
</feature>
<feature type="sequence variant" description="In strain: DPF-2, DPF-30, DPF-62, MA-10.2, DPF-82.1, 178.7, DPF-13, MA-4.4, EM-10, VC-805, MA-4.2, DPF-46, DPF-77, VC-815 and 709.6.">
    <original>N</original>
    <variation>K</variation>
    <location>
        <position position="368"/>
    </location>
</feature>
<name>HSP83_DROME</name>
<evidence type="ECO:0000250" key="1"/>
<evidence type="ECO:0000250" key="2">
    <source>
        <dbReference type="UniProtKB" id="P07900"/>
    </source>
</evidence>
<evidence type="ECO:0000256" key="3">
    <source>
        <dbReference type="SAM" id="MobiDB-lite"/>
    </source>
</evidence>
<evidence type="ECO:0000269" key="4">
    <source>
    </source>
</evidence>
<evidence type="ECO:0000269" key="5">
    <source>
    </source>
</evidence>
<evidence type="ECO:0000269" key="6">
    <source>
    </source>
</evidence>
<evidence type="ECO:0000269" key="7">
    <source>
    </source>
</evidence>
<evidence type="ECO:0000269" key="8">
    <source>
    </source>
</evidence>
<evidence type="ECO:0000269" key="9">
    <source>
    </source>
</evidence>
<evidence type="ECO:0000269" key="10">
    <source>
    </source>
</evidence>
<evidence type="ECO:0000269" key="11">
    <source>
    </source>
</evidence>
<evidence type="ECO:0000269" key="12">
    <source>
    </source>
</evidence>
<evidence type="ECO:0000303" key="13">
    <source>
    </source>
</evidence>
<evidence type="ECO:0000305" key="14"/>
<evidence type="ECO:0000312" key="15">
    <source>
        <dbReference type="FlyBase" id="FBgn0001233"/>
    </source>
</evidence>
<evidence type="ECO:0000312" key="16">
    <source>
        <dbReference type="Proteomes" id="UP000000803"/>
    </source>
</evidence>
<organism evidence="16">
    <name type="scientific">Drosophila melanogaster</name>
    <name type="common">Fruit fly</name>
    <dbReference type="NCBI Taxonomy" id="7227"/>
    <lineage>
        <taxon>Eukaryota</taxon>
        <taxon>Metazoa</taxon>
        <taxon>Ecdysozoa</taxon>
        <taxon>Arthropoda</taxon>
        <taxon>Hexapoda</taxon>
        <taxon>Insecta</taxon>
        <taxon>Pterygota</taxon>
        <taxon>Neoptera</taxon>
        <taxon>Endopterygota</taxon>
        <taxon>Diptera</taxon>
        <taxon>Brachycera</taxon>
        <taxon>Muscomorpha</taxon>
        <taxon>Ephydroidea</taxon>
        <taxon>Drosophilidae</taxon>
        <taxon>Drosophila</taxon>
        <taxon>Sophophora</taxon>
    </lineage>
</organism>
<comment type="function">
    <text evidence="7 8 9">Molecular chaperone that promotes the maturation, structural maintenance and proper regulation of specific target proteins involved for instance in cell cycle control and signal transduction (PubMed:18344983, PubMed:21186352, PubMed:22902557). Undergoes a functional cycle that is linked to its ATPase activity. This cycle probably induces conformational changes in the client proteins, thereby causing their activation. Interacts dynamically with various co-chaperones that modulate its substrate recognition, ATPase cycle and chaperone function. Together with Hop and piwi, mediates canalization, also known as developmental robustness, likely via epigenetic silencing of existing genetic variants and suppression of transposon-induced new genetic variation. Required for piRNA biogenesis by facilitating loading of piRNAs into PIWI proteins (PubMed:21186352, PubMed:22902557).</text>
</comment>
<comment type="subunit">
    <text evidence="2 4 8 9 10 11 12">Homodimer (By similarity). Forms a complex with Hop and piwi; probably Hop mediates the interaction between piwi and Hsp83 (PubMed:21186352). Forms a complex including sicily, ND-42 and Hsp83; the complex is necessary to chaperone ND-42 in the cytoplasm before mitochondrial import; the interaction with sicily is direct and is dependent on its ATPase activity (PubMed:23509070). Interacts with shu (PubMed:22902557). Interacts with Nup358 (via TPR repeats); the interaction is required for the nuclear import of the sesquiterpenoid juvenile hormone receptor Met (PubMed:27979731). Forms a complex with Dpit47 and Hsp70aa (PubMed:11493638). Interacts with mora (PubMed:31907206).</text>
</comment>
<comment type="interaction">
    <interactant intactId="EBI-136814">
        <id>P02828</id>
    </interactant>
    <interactant intactId="EBI-194490">
        <id>P92204</id>
        <label>Nelf-E</label>
    </interactant>
    <organismsDiffer>false</organismsDiffer>
    <experiments>2</experiments>
</comment>
<comment type="subcellular location">
    <subcellularLocation>
        <location>Cytoplasm</location>
    </subcellularLocation>
</comment>
<comment type="induction">
    <text>In contrast to other major heat shock proteins, this one is also expressed at normal growth temperatures. It is also developmentally expressed during oogenesis.</text>
</comment>
<comment type="domain">
    <text evidence="1">The TPR repeat-binding motif mediates interaction with TPR repeat-containing proteins.</text>
</comment>
<comment type="disruption phenotype">
    <text evidence="10">RNAi-mediated knockdown is lethal at third instar larva stage and shows decreased levels of sicily, ND-42, and ND-30.</text>
</comment>
<comment type="similarity">
    <text evidence="14">Belongs to the heat shock protein 90 family.</text>
</comment>
<proteinExistence type="evidence at protein level"/>
<keyword id="KW-0067">ATP-binding</keyword>
<keyword id="KW-0143">Chaperone</keyword>
<keyword id="KW-0963">Cytoplasm</keyword>
<keyword id="KW-0547">Nucleotide-binding</keyword>
<keyword id="KW-0597">Phosphoprotein</keyword>
<keyword id="KW-1185">Reference proteome</keyword>
<keyword id="KW-0346">Stress response</keyword>